<feature type="chain" id="PRO_0000229737" description="Protein regulator of cytokinesis 1">
    <location>
        <begin position="1"/>
        <end position="620"/>
    </location>
</feature>
<feature type="region of interest" description="Dimerization">
    <location>
        <begin position="1"/>
        <end position="341"/>
    </location>
</feature>
<feature type="region of interest" description="Required for the interaction with KIF4A" evidence="6">
    <location>
        <begin position="1"/>
        <end position="303"/>
    </location>
</feature>
<feature type="region of interest" description="Spectrin-fold">
    <location>
        <begin position="342"/>
        <end position="466"/>
    </location>
</feature>
<feature type="region of interest" description="Disordered" evidence="2">
    <location>
        <begin position="446"/>
        <end position="488"/>
    </location>
</feature>
<feature type="region of interest" description="Unstructured, Arg/Lys rich">
    <location>
        <begin position="467"/>
        <end position="620"/>
    </location>
</feature>
<feature type="region of interest" description="Disordered" evidence="2">
    <location>
        <begin position="517"/>
        <end position="545"/>
    </location>
</feature>
<feature type="region of interest" description="Disordered" evidence="2">
    <location>
        <begin position="600"/>
        <end position="620"/>
    </location>
</feature>
<feature type="coiled-coil region" evidence="1">
    <location>
        <begin position="96"/>
        <end position="133"/>
    </location>
</feature>
<feature type="coiled-coil region" evidence="1">
    <location>
        <begin position="211"/>
        <end position="304"/>
    </location>
</feature>
<feature type="coiled-coil region" evidence="1">
    <location>
        <begin position="383"/>
        <end position="463"/>
    </location>
</feature>
<feature type="compositionally biased region" description="Basic and acidic residues" evidence="2">
    <location>
        <begin position="446"/>
        <end position="459"/>
    </location>
</feature>
<feature type="compositionally biased region" description="Polar residues" evidence="2">
    <location>
        <begin position="606"/>
        <end position="620"/>
    </location>
</feature>
<feature type="site" description="Tubulin binding">
    <location>
        <position position="377"/>
    </location>
</feature>
<feature type="site" description="Tubulin binding">
    <location>
        <position position="387"/>
    </location>
</feature>
<feature type="modified residue" description="Phosphothreonine; by CDK1" evidence="10 12 17 28">
    <location>
        <position position="470"/>
    </location>
</feature>
<feature type="modified residue" description="Phosphothreonine; by CDK1" evidence="10 12 17 28">
    <location>
        <position position="481"/>
    </location>
</feature>
<feature type="modified residue" description="Phosphoserine" evidence="27">
    <location>
        <position position="513"/>
    </location>
</feature>
<feature type="modified residue" description="Phosphoserine" evidence="28">
    <location>
        <position position="571"/>
    </location>
</feature>
<feature type="modified residue" description="Phosphothreonine" evidence="10">
    <location>
        <position position="578"/>
    </location>
</feature>
<feature type="modified residue" description="Phosphothreonine; by PLK1" evidence="10">
    <location>
        <position position="616"/>
    </location>
</feature>
<feature type="splice variant" id="VSP_035875" description="In isoform 3." evidence="18">
    <location>
        <begin position="50"/>
        <end position="90"/>
    </location>
</feature>
<feature type="splice variant" id="VSP_051979" description="In isoform 2." evidence="19">
    <location>
        <begin position="397"/>
        <end position="426"/>
    </location>
</feature>
<feature type="splice variant" id="VSP_035876" description="In isoform 3." evidence="18">
    <original>GGYPGSAPLQRNFSINSVASTYSEFAKDPSLSDSSTVGLQRELSKASKSDATSGILNSTNIQS</original>
    <variation>ARTFKGFQI</variation>
    <location>
        <begin position="558"/>
        <end position="620"/>
    </location>
</feature>
<feature type="splice variant" id="VSP_051980" description="In isoform 2 and isoform 4." evidence="19 20">
    <location>
        <begin position="584"/>
        <end position="597"/>
    </location>
</feature>
<feature type="sequence variant" id="VAR_047768" description="In dbSNP:rs7172758." evidence="4 7 17">
    <original>A</original>
    <variation>E</variation>
    <location>
        <position position="187"/>
    </location>
</feature>
<feature type="sequence variant" id="VAR_047769" description="In dbSNP:rs12911192.">
    <original>Y</original>
    <variation>C</variation>
    <location>
        <position position="511"/>
    </location>
</feature>
<feature type="mutagenesis site" description="No effect. Abolishes CDK1-mediated phosphorylation, leading to prematurely recruit PLK1 to the spindle during prometaphase and blocking mitotic progression; when associated with A-481." evidence="3 10 17">
    <original>T</original>
    <variation>A</variation>
    <location>
        <position position="470"/>
    </location>
</feature>
<feature type="mutagenesis site" description="No effect. Reduces in vitro cyclin E-CDK2 phosphorylation and causes extensive bundling of microtubules to the mitotic spindle; when associated with A-470." evidence="3 10 17">
    <original>T</original>
    <variation>A</variation>
    <location>
        <position position="481"/>
    </location>
</feature>
<feature type="mutagenesis site" description="Weakly reduces binding to the POLO box domains of PLK1." evidence="10">
    <original>ST</original>
    <variation>AA</variation>
    <location>
        <begin position="577"/>
        <end position="578"/>
    </location>
</feature>
<feature type="mutagenesis site" description="Impairs binding to the POLO box domains of PLK1, preventing phosphorylation by PLK1 and recruitment of PLK1 to the spindle." evidence="10">
    <original>ST</original>
    <variation>AA</variation>
    <location>
        <begin position="615"/>
        <end position="616"/>
    </location>
</feature>
<feature type="sequence conflict" description="In Ref. 5; BX647317." evidence="21" ref="5">
    <original>E</original>
    <variation>G</variation>
    <location>
        <position position="416"/>
    </location>
</feature>
<feature type="helix" evidence="31">
    <location>
        <begin position="3"/>
        <end position="28"/>
    </location>
</feature>
<feature type="helix" evidence="31">
    <location>
        <begin position="33"/>
        <end position="82"/>
    </location>
</feature>
<feature type="helix" evidence="31">
    <location>
        <begin position="96"/>
        <end position="135"/>
    </location>
</feature>
<feature type="helix" evidence="31">
    <location>
        <begin position="150"/>
        <end position="188"/>
    </location>
</feature>
<feature type="helix" evidence="31">
    <location>
        <begin position="195"/>
        <end position="201"/>
    </location>
</feature>
<feature type="helix" evidence="31">
    <location>
        <begin position="212"/>
        <end position="249"/>
    </location>
</feature>
<feature type="helix" evidence="31">
    <location>
        <begin position="254"/>
        <end position="263"/>
    </location>
</feature>
<feature type="helix" evidence="31">
    <location>
        <begin position="271"/>
        <end position="306"/>
    </location>
</feature>
<feature type="helix" evidence="31">
    <location>
        <begin position="312"/>
        <end position="316"/>
    </location>
</feature>
<feature type="helix" evidence="29">
    <location>
        <begin position="341"/>
        <end position="345"/>
    </location>
</feature>
<feature type="helix" evidence="29">
    <location>
        <begin position="347"/>
        <end position="373"/>
    </location>
</feature>
<feature type="helix" evidence="30">
    <location>
        <begin position="375"/>
        <end position="378"/>
    </location>
</feature>
<feature type="helix" evidence="29">
    <location>
        <begin position="385"/>
        <end position="417"/>
    </location>
</feature>
<feature type="strand" evidence="31">
    <location>
        <begin position="425"/>
        <end position="427"/>
    </location>
</feature>
<feature type="helix" evidence="29">
    <location>
        <begin position="428"/>
        <end position="464"/>
    </location>
</feature>
<feature type="modified residue" description="Phosphoserine" evidence="26">
    <location sequence="O43663-2">
        <position position="541"/>
    </location>
</feature>
<feature type="modified residue" description="Phosphoserine" evidence="26">
    <location sequence="O43663-4">
        <position position="571"/>
    </location>
</feature>
<comment type="function">
    <text evidence="3 6 8 9 11 13 14 17">Key regulator of cytokinesis that cross-links antiparrallel microtubules at an average distance of 35 nM. Essential for controlling the spatiotemporal formation of the midzone and successful cytokinesis. Required for KIF14 localization to the central spindle and midbody. Required to recruit PLK1 to the spindle. Stimulates PLK1 phosphorylation of RACGAP1 to allow recruitment of ECT2 to the central spindle. Acts as an oncogene for promoting bladder cancer cells proliferation, apoptosis inhibition and carcinogenic progression (PubMed:17409436).</text>
</comment>
<comment type="subunit">
    <text evidence="5 6 8 9 11 13 14 15 16">Homodimer (PubMed:20691902). Interacts with the C-terminal Rho-GAP domain and the basic region of RACGAP1 (PubMed:14744859). The interaction with RACGAP1 inhibits its GAP activity towards CDC42 in vitro, which may be required for maintaining normal spindle morphology (PubMed:14744859). Interacts (via N-terminus) with the C-terminus of CENPE (via C-terminus); the interaction occurs during late mitosis (PubMed:15297875). Interacts (via N-terminus) with KIF4A (via C-terminus); the interaction is required for the progression of mitosis (PubMed:15297875, PubMed:16431929, PubMed:29848660). Interacts (via N-terminus) with KIF23 (via C-terminus); the interaction occurs during late mitosis (PubMed:15297875). Interacts with KIF14 and KIF20A (PubMed:15625105, PubMed:16431929). Interacts with PLK1 (PubMed:19468300). Interacts with KIF20B (PubMed:17409436). Interacts with CCDC66 (PubMed:35849559).</text>
</comment>
<comment type="interaction">
    <interactant intactId="EBI-741137">
        <id>O43663</id>
    </interactant>
    <interactant intactId="EBI-2818055">
        <id>Q08AH1</id>
        <label>ACSM1</label>
    </interactant>
    <organismsDiffer>false</organismsDiffer>
    <experiments>2</experiments>
</comment>
<comment type="interaction">
    <interactant intactId="EBI-741137">
        <id>O43663</id>
    </interactant>
    <interactant intactId="EBI-739784">
        <id>Q9BW66</id>
        <label>CINP</label>
    </interactant>
    <organismsDiffer>false</organismsDiffer>
    <experiments>3</experiments>
</comment>
<comment type="interaction">
    <interactant intactId="EBI-741137">
        <id>O43663</id>
    </interactant>
    <interactant intactId="EBI-1050743">
        <id>P31153</id>
        <label>MAT2A</label>
    </interactant>
    <organismsDiffer>false</organismsDiffer>
    <experiments>3</experiments>
</comment>
<comment type="interaction">
    <interactant intactId="EBI-741137">
        <id>O43663</id>
    </interactant>
    <interactant intactId="EBI-2682139">
        <id>P61925</id>
        <label>PKIA</label>
    </interactant>
    <organismsDiffer>false</organismsDiffer>
    <experiments>3</experiments>
</comment>
<comment type="interaction">
    <interactant intactId="EBI-741137">
        <id>O43663</id>
    </interactant>
    <interactant intactId="EBI-741602">
        <id>O94972</id>
        <label>TRIM37</label>
    </interactant>
    <organismsDiffer>false</organismsDiffer>
    <experiments>3</experiments>
</comment>
<comment type="interaction">
    <interactant intactId="EBI-1503979">
        <id>O43663-1</id>
    </interactant>
    <interactant intactId="EBI-1503979">
        <id>O43663-1</id>
        <label>PRC1</label>
    </interactant>
    <organismsDiffer>false</organismsDiffer>
    <experiments>7</experiments>
</comment>
<comment type="subcellular location">
    <subcellularLocation>
        <location evidence="11">Nucleus</location>
    </subcellularLocation>
    <subcellularLocation>
        <location>Cytoplasm</location>
    </subcellularLocation>
    <subcellularLocation>
        <location evidence="6 8">Cytoplasm</location>
        <location evidence="6 8">Cytoskeleton</location>
        <location evidence="6 8">Spindle pole</location>
    </subcellularLocation>
    <subcellularLocation>
        <location evidence="6 8 11 16">Midbody</location>
    </subcellularLocation>
    <subcellularLocation>
        <location evidence="6">Chromosome</location>
    </subcellularLocation>
    <text evidence="6 8 11">Colocalized with KIF20B in the nucleus of bladder carcinoma cells at the interphase. Colocalized with KIF20B in bladder carcinoma cells at prophase, metaphase, early anaphase, at the midzone in late anaphase and at the contractile ring in telophase (PubMed:17409436). Predominantly localized to the nucleus of interphase cells. During mitosis becomes associated with the mitotic spindle poles and localizes with the cell midbody during cytokinesis. Co-localizes with PRC1 in early mitosis and at the spindle midzone from anaphase B to telophase (PubMed:15297875, PubMed:15625105).</text>
</comment>
<comment type="alternative products">
    <event type="alternative splicing"/>
    <isoform>
        <id>O43663-1</id>
        <name evidence="17">1</name>
        <sequence type="displayed"/>
    </isoform>
    <isoform>
        <id>O43663-2</id>
        <name evidence="7">2</name>
        <sequence type="described" ref="VSP_051979 VSP_051980"/>
    </isoform>
    <isoform>
        <id>O43663-3</id>
        <name>3</name>
        <sequence type="described" ref="VSP_035875 VSP_035876"/>
    </isoform>
    <isoform>
        <id>O43663-4</id>
        <name>4</name>
        <sequence type="described" ref="VSP_051980"/>
    </isoform>
</comment>
<comment type="tissue specificity">
    <text evidence="11">Overexpressed in bladder cancer cells (PubMed:17409436).</text>
</comment>
<comment type="domain">
    <text>Microtubule binding occurs via a basic patch in the central spectrin-like domain and also requires the unstructured C-terminal domain.</text>
</comment>
<comment type="PTM">
    <text evidence="10 12 17">Phosphorylation by CDK1 in early mitosis holds PRC1 in an inactive monomeric state, during the metaphase to anaphase transition, PRC1 is dephosphorylated, promoting interaction with KIF4A, which then translocates PRC1 along mitotic spindles to the plus ends of antiparallel interdigitating microtubules. Dephosphorylation also promotes MT-bundling activity by allowing dimerization. Phosphorylation by CDK1 prevents PLK1-binding: upon degradation of CDK1 at anaphase and dephosphorylation, it is then phosphorylated by PLK1, leading to cytokinesis.</text>
</comment>
<comment type="similarity">
    <text evidence="21">Belongs to the MAP65/ASE1 family.</text>
</comment>
<keyword id="KW-0002">3D-structure</keyword>
<keyword id="KW-0025">Alternative splicing</keyword>
<keyword id="KW-0131">Cell cycle</keyword>
<keyword id="KW-0132">Cell division</keyword>
<keyword id="KW-0158">Chromosome</keyword>
<keyword id="KW-0175">Coiled coil</keyword>
<keyword id="KW-0963">Cytoplasm</keyword>
<keyword id="KW-0206">Cytoskeleton</keyword>
<keyword id="KW-0493">Microtubule</keyword>
<keyword id="KW-0539">Nucleus</keyword>
<keyword id="KW-0553">Oncogene</keyword>
<keyword id="KW-0597">Phosphoprotein</keyword>
<keyword id="KW-1267">Proteomics identification</keyword>
<keyword id="KW-1185">Reference proteome</keyword>
<reference evidence="21 22" key="1">
    <citation type="journal article" date="1998" name="Mol. Cell">
        <title>PRC1: a human mitotic spindle-associated CDK substrate protein required for cytokinesis.</title>
        <authorList>
            <person name="Jiang W."/>
            <person name="Jimenez G."/>
            <person name="Wells N.J."/>
            <person name="Hope T.J."/>
            <person name="Wahl G.M."/>
            <person name="Hunter T."/>
            <person name="Fukunaga R."/>
        </authorList>
    </citation>
    <scope>NUCLEOTIDE SEQUENCE [MRNA] (ISOFORM 1)</scope>
    <scope>FUNCTION</scope>
    <scope>MUTAGENESIS OF THR-470 AND THR-481</scope>
    <scope>SUBCELLULAR LOCATION</scope>
    <scope>PHOSPHORYLATION AT THR-470 AND THR-481</scope>
    <scope>VARIANT GLU-187</scope>
</reference>
<reference key="2">
    <citation type="journal article" date="2004" name="Nat. Genet.">
        <title>Complete sequencing and characterization of 21,243 full-length human cDNAs.</title>
        <authorList>
            <person name="Ota T."/>
            <person name="Suzuki Y."/>
            <person name="Nishikawa T."/>
            <person name="Otsuki T."/>
            <person name="Sugiyama T."/>
            <person name="Irie R."/>
            <person name="Wakamatsu A."/>
            <person name="Hayashi K."/>
            <person name="Sato H."/>
            <person name="Nagai K."/>
            <person name="Kimura K."/>
            <person name="Makita H."/>
            <person name="Sekine M."/>
            <person name="Obayashi M."/>
            <person name="Nishi T."/>
            <person name="Shibahara T."/>
            <person name="Tanaka T."/>
            <person name="Ishii S."/>
            <person name="Yamamoto J."/>
            <person name="Saito K."/>
            <person name="Kawai Y."/>
            <person name="Isono Y."/>
            <person name="Nakamura Y."/>
            <person name="Nagahari K."/>
            <person name="Murakami K."/>
            <person name="Yasuda T."/>
            <person name="Iwayanagi T."/>
            <person name="Wagatsuma M."/>
            <person name="Shiratori A."/>
            <person name="Sudo H."/>
            <person name="Hosoiri T."/>
            <person name="Kaku Y."/>
            <person name="Kodaira H."/>
            <person name="Kondo H."/>
            <person name="Sugawara M."/>
            <person name="Takahashi M."/>
            <person name="Kanda K."/>
            <person name="Yokoi T."/>
            <person name="Furuya T."/>
            <person name="Kikkawa E."/>
            <person name="Omura Y."/>
            <person name="Abe K."/>
            <person name="Kamihara K."/>
            <person name="Katsuta N."/>
            <person name="Sato K."/>
            <person name="Tanikawa M."/>
            <person name="Yamazaki M."/>
            <person name="Ninomiya K."/>
            <person name="Ishibashi T."/>
            <person name="Yamashita H."/>
            <person name="Murakawa K."/>
            <person name="Fujimori K."/>
            <person name="Tanai H."/>
            <person name="Kimata M."/>
            <person name="Watanabe M."/>
            <person name="Hiraoka S."/>
            <person name="Chiba Y."/>
            <person name="Ishida S."/>
            <person name="Ono Y."/>
            <person name="Takiguchi S."/>
            <person name="Watanabe S."/>
            <person name="Yosida M."/>
            <person name="Hotuta T."/>
            <person name="Kusano J."/>
            <person name="Kanehori K."/>
            <person name="Takahashi-Fujii A."/>
            <person name="Hara H."/>
            <person name="Tanase T.-O."/>
            <person name="Nomura Y."/>
            <person name="Togiya S."/>
            <person name="Komai F."/>
            <person name="Hara R."/>
            <person name="Takeuchi K."/>
            <person name="Arita M."/>
            <person name="Imose N."/>
            <person name="Musashino K."/>
            <person name="Yuuki H."/>
            <person name="Oshima A."/>
            <person name="Sasaki N."/>
            <person name="Aotsuka S."/>
            <person name="Yoshikawa Y."/>
            <person name="Matsunawa H."/>
            <person name="Ichihara T."/>
            <person name="Shiohata N."/>
            <person name="Sano S."/>
            <person name="Moriya S."/>
            <person name="Momiyama H."/>
            <person name="Satoh N."/>
            <person name="Takami S."/>
            <person name="Terashima Y."/>
            <person name="Suzuki O."/>
            <person name="Nakagawa S."/>
            <person name="Senoh A."/>
            <person name="Mizoguchi H."/>
            <person name="Goto Y."/>
            <person name="Shimizu F."/>
            <person name="Wakebe H."/>
            <person name="Hishigaki H."/>
            <person name="Watanabe T."/>
            <person name="Sugiyama A."/>
            <person name="Takemoto M."/>
            <person name="Kawakami B."/>
            <person name="Yamazaki M."/>
            <person name="Watanabe K."/>
            <person name="Kumagai A."/>
            <person name="Itakura S."/>
            <person name="Fukuzumi Y."/>
            <person name="Fujimori Y."/>
            <person name="Komiyama M."/>
            <person name="Tashiro H."/>
            <person name="Tanigami A."/>
            <person name="Fujiwara T."/>
            <person name="Ono T."/>
            <person name="Yamada K."/>
            <person name="Fujii Y."/>
            <person name="Ozaki K."/>
            <person name="Hirao M."/>
            <person name="Ohmori Y."/>
            <person name="Kawabata A."/>
            <person name="Hikiji T."/>
            <person name="Kobatake N."/>
            <person name="Inagaki H."/>
            <person name="Ikema Y."/>
            <person name="Okamoto S."/>
            <person name="Okitani R."/>
            <person name="Kawakami T."/>
            <person name="Noguchi S."/>
            <person name="Itoh T."/>
            <person name="Shigeta K."/>
            <person name="Senba T."/>
            <person name="Matsumura K."/>
            <person name="Nakajima Y."/>
            <person name="Mizuno T."/>
            <person name="Morinaga M."/>
            <person name="Sasaki M."/>
            <person name="Togashi T."/>
            <person name="Oyama M."/>
            <person name="Hata H."/>
            <person name="Watanabe M."/>
            <person name="Komatsu T."/>
            <person name="Mizushima-Sugano J."/>
            <person name="Satoh T."/>
            <person name="Shirai Y."/>
            <person name="Takahashi Y."/>
            <person name="Nakagawa K."/>
            <person name="Okumura K."/>
            <person name="Nagase T."/>
            <person name="Nomura N."/>
            <person name="Kikuchi H."/>
            <person name="Masuho Y."/>
            <person name="Yamashita R."/>
            <person name="Nakai K."/>
            <person name="Yada T."/>
            <person name="Nakamura Y."/>
            <person name="Ohara O."/>
            <person name="Isogai T."/>
            <person name="Sugano S."/>
        </authorList>
    </citation>
    <scope>NUCLEOTIDE SEQUENCE [LARGE SCALE MRNA] (ISOFORM 3)</scope>
    <scope>VARIANT GLU-187</scope>
</reference>
<reference key="3">
    <citation type="journal article" date="2006" name="Nature">
        <title>Analysis of the DNA sequence and duplication history of human chromosome 15.</title>
        <authorList>
            <person name="Zody M.C."/>
            <person name="Garber M."/>
            <person name="Sharpe T."/>
            <person name="Young S.K."/>
            <person name="Rowen L."/>
            <person name="O'Neill K."/>
            <person name="Whittaker C.A."/>
            <person name="Kamal M."/>
            <person name="Chang J.L."/>
            <person name="Cuomo C.A."/>
            <person name="Dewar K."/>
            <person name="FitzGerald M.G."/>
            <person name="Kodira C.D."/>
            <person name="Madan A."/>
            <person name="Qin S."/>
            <person name="Yang X."/>
            <person name="Abbasi N."/>
            <person name="Abouelleil A."/>
            <person name="Arachchi H.M."/>
            <person name="Baradarani L."/>
            <person name="Birditt B."/>
            <person name="Bloom S."/>
            <person name="Bloom T."/>
            <person name="Borowsky M.L."/>
            <person name="Burke J."/>
            <person name="Butler J."/>
            <person name="Cook A."/>
            <person name="DeArellano K."/>
            <person name="DeCaprio D."/>
            <person name="Dorris L. III"/>
            <person name="Dors M."/>
            <person name="Eichler E.E."/>
            <person name="Engels R."/>
            <person name="Fahey J."/>
            <person name="Fleetwood P."/>
            <person name="Friedman C."/>
            <person name="Gearin G."/>
            <person name="Hall J.L."/>
            <person name="Hensley G."/>
            <person name="Johnson E."/>
            <person name="Jones C."/>
            <person name="Kamat A."/>
            <person name="Kaur A."/>
            <person name="Locke D.P."/>
            <person name="Madan A."/>
            <person name="Munson G."/>
            <person name="Jaffe D.B."/>
            <person name="Lui A."/>
            <person name="Macdonald P."/>
            <person name="Mauceli E."/>
            <person name="Naylor J.W."/>
            <person name="Nesbitt R."/>
            <person name="Nicol R."/>
            <person name="O'Leary S.B."/>
            <person name="Ratcliffe A."/>
            <person name="Rounsley S."/>
            <person name="She X."/>
            <person name="Sneddon K.M.B."/>
            <person name="Stewart S."/>
            <person name="Sougnez C."/>
            <person name="Stone S.M."/>
            <person name="Topham K."/>
            <person name="Vincent D."/>
            <person name="Wang S."/>
            <person name="Zimmer A.R."/>
            <person name="Birren B.W."/>
            <person name="Hood L."/>
            <person name="Lander E.S."/>
            <person name="Nusbaum C."/>
        </authorList>
    </citation>
    <scope>NUCLEOTIDE SEQUENCE [LARGE SCALE GENOMIC DNA]</scope>
</reference>
<reference evidence="21 23" key="4">
    <citation type="journal article" date="2004" name="Genome Res.">
        <title>The status, quality, and expansion of the NIH full-length cDNA project: the Mammalian Gene Collection (MGC).</title>
        <authorList>
            <consortium name="The MGC Project Team"/>
        </authorList>
    </citation>
    <scope>NUCLEOTIDE SEQUENCE [LARGE SCALE MRNA] (ISOFORMS 1 AND 2)</scope>
    <scope>VARIANT GLU-187</scope>
    <source>
        <tissue evidence="23">Kidney</tissue>
        <tissue evidence="24">Placenta</tissue>
    </source>
</reference>
<reference key="5">
    <citation type="journal article" date="2007" name="BMC Genomics">
        <title>The full-ORF clone resource of the German cDNA consortium.</title>
        <authorList>
            <person name="Bechtel S."/>
            <person name="Rosenfelder H."/>
            <person name="Duda A."/>
            <person name="Schmidt C.P."/>
            <person name="Ernst U."/>
            <person name="Wellenreuther R."/>
            <person name="Mehrle A."/>
            <person name="Schuster C."/>
            <person name="Bahr A."/>
            <person name="Bloecker H."/>
            <person name="Heubner D."/>
            <person name="Hoerlein A."/>
            <person name="Michel G."/>
            <person name="Wedler H."/>
            <person name="Koehrer K."/>
            <person name="Ottenwaelder B."/>
            <person name="Poustka A."/>
            <person name="Wiemann S."/>
            <person name="Schupp I."/>
        </authorList>
    </citation>
    <scope>NUCLEOTIDE SEQUENCE [LARGE SCALE MRNA] OF 411-620 (ISOFORM 4)</scope>
</reference>
<reference evidence="21" key="6">
    <citation type="journal article" date="2002" name="J. Cell Biol.">
        <title>PRC1 is a microtubule binding and bundling protein essential to maintain the mitotic spindle midzone.</title>
        <authorList>
            <person name="Mollinari C."/>
            <person name="Kleman J.-P."/>
            <person name="Jiang W."/>
            <person name="Schoehn G."/>
            <person name="Hunter T."/>
            <person name="Margolis R.L."/>
        </authorList>
    </citation>
    <scope>FUNCTION</scope>
    <scope>MUTAGENESIS OF THR-470 AND THR-481</scope>
    <scope>SUBCELLULAR LOCATION</scope>
</reference>
<reference evidence="21" key="7">
    <citation type="journal article" date="2004" name="EMBO J.">
        <title>Essential roles of KIF4 and its binding partner PRC1 in organized central spindle midzone formation.</title>
        <authorList>
            <person name="Kurasawa Y."/>
            <person name="Earnshaw W.C."/>
            <person name="Mochizuki Y."/>
            <person name="Dohmae N."/>
            <person name="Todokoro K."/>
        </authorList>
    </citation>
    <scope>FUNCTION</scope>
    <scope>INTERACTION WITH CENPE; KIF4A AND KIF23</scope>
    <scope>SUBCELLULAR LOCATION</scope>
</reference>
<reference evidence="21" key="8">
    <citation type="journal article" date="2004" name="J. Biol. Chem.">
        <title>Human mitotic spindle-associated protein PRC1 inhibits MgcRacGAP activity toward Cdc42 during the metaphase.</title>
        <authorList>
            <person name="Ban R."/>
            <person name="Irino Y."/>
            <person name="Fukami K."/>
            <person name="Tanaka H."/>
        </authorList>
    </citation>
    <scope>INTERACTION WITH RACGAP1</scope>
</reference>
<reference evidence="21" key="9">
    <citation type="journal article" date="2005" name="Proc. Natl. Acad. Sci. U.S.A.">
        <title>Cell cycle-dependent translocation of PRC1 on the spindle by Kif4 is essential for midzone formation and cytokinesis.</title>
        <authorList>
            <person name="Zhu C."/>
            <person name="Jiang W."/>
        </authorList>
    </citation>
    <scope>FUNCTION</scope>
    <scope>INTERACTION WITH KIF4A</scope>
</reference>
<reference key="10">
    <citation type="journal article" date="2006" name="J. Cell Biol.">
        <title>KIF14 and citron kinase act together to promote efficient cytokinesis.</title>
        <authorList>
            <person name="Gruneberg U."/>
            <person name="Neef R."/>
            <person name="Li X."/>
            <person name="Chan E.H.Y."/>
            <person name="Chalamalasetty R.B."/>
            <person name="Nigg E.A."/>
            <person name="Barr F.A."/>
        </authorList>
    </citation>
    <scope>FUNCTION</scope>
    <scope>INTERACTION WITH KIF4A; KIF14; KIF20A AND KIF23</scope>
</reference>
<reference key="11">
    <citation type="journal article" date="2007" name="Cancer Res.">
        <title>Oncogenic role of MPHOSPH1, a cancer-testis antigen specific to human bladder cancer.</title>
        <authorList>
            <person name="Kanehira M."/>
            <person name="Katagiri T."/>
            <person name="Shimo A."/>
            <person name="Takata R."/>
            <person name="Shuin T."/>
            <person name="Miki T."/>
            <person name="Fujioka T."/>
            <person name="Nakamura Y."/>
        </authorList>
    </citation>
    <scope>FUNCTION</scope>
    <scope>INTERACTION WITH KIF20B</scope>
    <scope>SUBCELLULAR LOCATION</scope>
    <scope>TISSUE SPECIFICITY</scope>
</reference>
<reference key="12">
    <citation type="journal article" date="2007" name="Cell Res.">
        <title>Mitotic phosphorylation of PRC1 at Thr470 is required for PRC1 oligomerization and proper central spindle organization.</title>
        <authorList>
            <person name="Fu C."/>
            <person name="Yan F."/>
            <person name="Wu F."/>
            <person name="Wu Q."/>
            <person name="Whittaker J."/>
            <person name="Hu H."/>
            <person name="Hu R."/>
            <person name="Yao X."/>
        </authorList>
    </citation>
    <scope>PHOSPHORYLATION AT THR-470 AND THR-481</scope>
</reference>
<reference key="13">
    <citation type="journal article" date="2007" name="Nat. Cell Biol.">
        <title>Choice of Plk1 docking partners during mitosis and cytokinesis is controlled by the activation state of Cdk1.</title>
        <authorList>
            <person name="Neef R."/>
            <person name="Gruneberg U."/>
            <person name="Kopajtich R."/>
            <person name="Li X."/>
            <person name="Nigg E.A."/>
            <person name="Sillje H."/>
            <person name="Barr F.A."/>
        </authorList>
    </citation>
    <scope>PHOSPHORYLATION AT THR-470; THR-481; THR-578 AND THR-616</scope>
    <scope>SUBCELLULAR LOCATION</scope>
    <scope>MUTAGENESIS OF THR-470; THR-481; 577-SER-THR-578 AND 615-SER-THR-616</scope>
</reference>
<reference key="14">
    <citation type="journal article" date="2008" name="Mol. Cell">
        <title>Kinase-selective enrichment enables quantitative phosphoproteomics of the kinome across the cell cycle.</title>
        <authorList>
            <person name="Daub H."/>
            <person name="Olsen J.V."/>
            <person name="Bairlein M."/>
            <person name="Gnad F."/>
            <person name="Oppermann F.S."/>
            <person name="Korner R."/>
            <person name="Greff Z."/>
            <person name="Keri G."/>
            <person name="Stemmann O."/>
            <person name="Mann M."/>
        </authorList>
    </citation>
    <scope>IDENTIFICATION BY MASS SPECTROMETRY [LARGE SCALE ANALYSIS]</scope>
    <source>
        <tissue>Cervix carcinoma</tissue>
    </source>
</reference>
<reference key="15">
    <citation type="journal article" date="2008" name="Proc. Natl. Acad. Sci. U.S.A.">
        <title>A quantitative atlas of mitotic phosphorylation.</title>
        <authorList>
            <person name="Dephoure N."/>
            <person name="Zhou C."/>
            <person name="Villen J."/>
            <person name="Beausoleil S.A."/>
            <person name="Bakalarski C.E."/>
            <person name="Elledge S.J."/>
            <person name="Gygi S.P."/>
        </authorList>
    </citation>
    <scope>PHOSPHORYLATION [LARGE SCALE ANALYSIS] AT SER-541 (ISOFORM 2)</scope>
    <scope>PHOSPHORYLATION [LARGE SCALE ANALYSIS] AT SER-571 (ISOFORM 4)</scope>
    <scope>IDENTIFICATION BY MASS SPECTROMETRY [LARGE SCALE ANALYSIS]</scope>
    <source>
        <tissue>Cervix carcinoma</tissue>
    </source>
</reference>
<reference key="16">
    <citation type="journal article" date="2009" name="Mol. Cell. Proteomics">
        <title>Large-scale proteomics analysis of the human kinome.</title>
        <authorList>
            <person name="Oppermann F.S."/>
            <person name="Gnad F."/>
            <person name="Olsen J.V."/>
            <person name="Hornberger R."/>
            <person name="Greff Z."/>
            <person name="Keri G."/>
            <person name="Mann M."/>
            <person name="Daub H."/>
        </authorList>
    </citation>
    <scope>IDENTIFICATION BY MASS SPECTROMETRY [LARGE SCALE ANALYSIS]</scope>
</reference>
<reference key="17">
    <citation type="journal article" date="2009" name="PLoS Biol.">
        <title>Polo-like kinase 1 directs assembly of the HsCyk-4 RhoGAP/Ect2 RhoGEF complex to initiate cleavage furrow formation.</title>
        <authorList>
            <person name="Wolfe B.A."/>
            <person name="Takaki T."/>
            <person name="Petronczki M."/>
            <person name="Glotzer M."/>
        </authorList>
    </citation>
    <scope>FUNCTION</scope>
    <scope>INTERACTION WITH PLK1</scope>
</reference>
<reference key="18">
    <citation type="journal article" date="2010" name="Sci. Signal.">
        <title>Quantitative phosphoproteomics reveals widespread full phosphorylation site occupancy during mitosis.</title>
        <authorList>
            <person name="Olsen J.V."/>
            <person name="Vermeulen M."/>
            <person name="Santamaria A."/>
            <person name="Kumar C."/>
            <person name="Miller M.L."/>
            <person name="Jensen L.J."/>
            <person name="Gnad F."/>
            <person name="Cox J."/>
            <person name="Jensen T.S."/>
            <person name="Nigg E.A."/>
            <person name="Brunak S."/>
            <person name="Mann M."/>
        </authorList>
    </citation>
    <scope>PHOSPHORYLATION [LARGE SCALE ANALYSIS] AT SER-513</scope>
    <scope>IDENTIFICATION BY MASS SPECTROMETRY [LARGE SCALE ANALYSIS]</scope>
    <source>
        <tissue>Cervix carcinoma</tissue>
    </source>
</reference>
<reference key="19">
    <citation type="journal article" date="2011" name="BMC Syst. Biol.">
        <title>Initial characterization of the human central proteome.</title>
        <authorList>
            <person name="Burkard T.R."/>
            <person name="Planyavsky M."/>
            <person name="Kaupe I."/>
            <person name="Breitwieser F.P."/>
            <person name="Buerckstuemmer T."/>
            <person name="Bennett K.L."/>
            <person name="Superti-Furga G."/>
            <person name="Colinge J."/>
        </authorList>
    </citation>
    <scope>IDENTIFICATION BY MASS SPECTROMETRY [LARGE SCALE ANALYSIS]</scope>
</reference>
<reference key="20">
    <citation type="journal article" date="2012" name="Proc. Natl. Acad. Sci. U.S.A.">
        <title>N-terminal acetylome analyses and functional insights of the N-terminal acetyltransferase NatB.</title>
        <authorList>
            <person name="Van Damme P."/>
            <person name="Lasa M."/>
            <person name="Polevoda B."/>
            <person name="Gazquez C."/>
            <person name="Elosegui-Artola A."/>
            <person name="Kim D.S."/>
            <person name="De Juan-Pardo E."/>
            <person name="Demeyer K."/>
            <person name="Hole K."/>
            <person name="Larrea E."/>
            <person name="Timmerman E."/>
            <person name="Prieto J."/>
            <person name="Arnesen T."/>
            <person name="Sherman F."/>
            <person name="Gevaert K."/>
            <person name="Aldabe R."/>
        </authorList>
    </citation>
    <scope>IDENTIFICATION BY MASS SPECTROMETRY [LARGE SCALE ANALYSIS]</scope>
</reference>
<reference key="21">
    <citation type="journal article" date="2013" name="J. Proteome Res.">
        <title>Toward a comprehensive characterization of a human cancer cell phosphoproteome.</title>
        <authorList>
            <person name="Zhou H."/>
            <person name="Di Palma S."/>
            <person name="Preisinger C."/>
            <person name="Peng M."/>
            <person name="Polat A.N."/>
            <person name="Heck A.J."/>
            <person name="Mohammed S."/>
        </authorList>
    </citation>
    <scope>PHOSPHORYLATION [LARGE SCALE ANALYSIS] AT THR-470; THR-481 AND SER-571</scope>
    <scope>IDENTIFICATION BY MASS SPECTROMETRY [LARGE SCALE ANALYSIS]</scope>
    <source>
        <tissue>Cervix carcinoma</tissue>
        <tissue>Erythroleukemia</tissue>
    </source>
</reference>
<reference key="22">
    <citation type="journal article" date="2018" name="J. Cell Sci.">
        <title>Fe-S cluster coordination of the chromokinesin KIF4A alters its subcellular localization during mitosis.</title>
        <authorList>
            <person name="Ben-Shimon L."/>
            <person name="Paul V.D."/>
            <person name="David-Kadoch G."/>
            <person name="Volpe M."/>
            <person name="Stuempfig M."/>
            <person name="Bill E."/>
            <person name="Muehlenhoff U."/>
            <person name="Lill R."/>
            <person name="Ben-Aroya S."/>
        </authorList>
    </citation>
    <scope>INTERACTION WITH KIF4A</scope>
</reference>
<reference key="23">
    <citation type="journal article" date="2022" name="PLoS Biol.">
        <title>The ciliopathy protein CCDC66 controls mitotic progression and cytokinesis by promoting microtubule nucleation and organization.</title>
        <authorList>
            <person name="Batman U."/>
            <person name="Deretic J."/>
            <person name="Firat-Karalar E.N."/>
        </authorList>
    </citation>
    <scope>SUBCELLULAR LOCATION</scope>
    <scope>INTERACTION WITH CCDC66</scope>
</reference>
<reference key="24">
    <citation type="journal article" date="2010" name="Cell">
        <title>Insights into antiparallel microtubule crosslinking by PRC1, a conserved nonmotor microtubule binding protein.</title>
        <authorList>
            <person name="Subramanian R."/>
            <person name="Wilson-Kubalek E.M."/>
            <person name="Arthur C.P."/>
            <person name="Bick M.J."/>
            <person name="Campbell E.A."/>
            <person name="Darst S.A."/>
            <person name="Milligan R.A."/>
            <person name="Kapoor T.M."/>
        </authorList>
    </citation>
    <scope>X-RAY CRYSTALLOGRAPHY (1.75 ANGSTROMS) OF 341-466</scope>
    <scope>ELECTRON MICROSCOPY</scope>
    <scope>TUBULIN-BINDING SITES</scope>
    <scope>FUNCTION</scope>
    <scope>SUBUNIT</scope>
</reference>
<sequence>MRRSEVLAEESIVCLQKALNHLREIWELIGIPEDQRLQRTEVVKKHIKELLDMMIAEEESLKERLIKSISVCQKELNTLCSELHVEPFQEEGETTILQLEKDLRTQVELMRKQKKERKQELKLLQEQDQELCEILCMPHYDIDSASVPSLEELNQFRQHVTTLRETKASRREEFVSIKRQIILCMEALDHTPDTSFERDVVCEDEDAFCLSLENIATLQKLLRQLEMQKSQNEAVCEGLRTQIRELWDRLQIPEEEREAVATIMSGSKAKVRKALQLEVDRLEELKMQNMKKVIEAIRVELVQYWDQCFYSQEQRQAFAPFCAEDYTESLLQLHDAEIVRLKNYYEVHKELFEGVQKWEETWRLFLEFERKASDPNRFTNRGGNLLKEEKQRAKLQKMLPKLEEELKARIELWEQEHSKAFMVNGQKFMEYVAEQWEMHRLEKERAKQERQLKNKKQTETEMLYGSAPRTPSKRRGLAPNTPGKARKLNTTTMSNATANSSIRPIFGGTVYHSPVSRLPPSGSKPVAASTCSGKKTPRTGRHGANKENLELNGSILSGGYPGSAPLQRNFSINSVASTYSEFAKDPSLSDSSTVGLQRELSKASKSDATSGILNSTNIQS</sequence>
<accession>O43663</accession>
<accession>A6NC44</accession>
<accession>B4DLR1</accession>
<accession>H9KV59</accession>
<accession>Q9BSB6</accession>
<name>PRC1_HUMAN</name>
<organism>
    <name type="scientific">Homo sapiens</name>
    <name type="common">Human</name>
    <dbReference type="NCBI Taxonomy" id="9606"/>
    <lineage>
        <taxon>Eukaryota</taxon>
        <taxon>Metazoa</taxon>
        <taxon>Chordata</taxon>
        <taxon>Craniata</taxon>
        <taxon>Vertebrata</taxon>
        <taxon>Euteleostomi</taxon>
        <taxon>Mammalia</taxon>
        <taxon>Eutheria</taxon>
        <taxon>Euarchontoglires</taxon>
        <taxon>Primates</taxon>
        <taxon>Haplorrhini</taxon>
        <taxon>Catarrhini</taxon>
        <taxon>Hominidae</taxon>
        <taxon>Homo</taxon>
    </lineage>
</organism>
<protein>
    <recommendedName>
        <fullName evidence="25">Protein regulator of cytokinesis 1</fullName>
    </recommendedName>
</protein>
<gene>
    <name evidence="25" type="primary">PRC1</name>
</gene>
<evidence type="ECO:0000255" key="1"/>
<evidence type="ECO:0000256" key="2">
    <source>
        <dbReference type="SAM" id="MobiDB-lite"/>
    </source>
</evidence>
<evidence type="ECO:0000269" key="3">
    <source>
    </source>
</evidence>
<evidence type="ECO:0000269" key="4">
    <source>
    </source>
</evidence>
<evidence type="ECO:0000269" key="5">
    <source>
    </source>
</evidence>
<evidence type="ECO:0000269" key="6">
    <source>
    </source>
</evidence>
<evidence type="ECO:0000269" key="7">
    <source>
    </source>
</evidence>
<evidence type="ECO:0000269" key="8">
    <source>
    </source>
</evidence>
<evidence type="ECO:0000269" key="9">
    <source>
    </source>
</evidence>
<evidence type="ECO:0000269" key="10">
    <source>
    </source>
</evidence>
<evidence type="ECO:0000269" key="11">
    <source>
    </source>
</evidence>
<evidence type="ECO:0000269" key="12">
    <source>
    </source>
</evidence>
<evidence type="ECO:0000269" key="13">
    <source>
    </source>
</evidence>
<evidence type="ECO:0000269" key="14">
    <source>
    </source>
</evidence>
<evidence type="ECO:0000269" key="15">
    <source>
    </source>
</evidence>
<evidence type="ECO:0000269" key="16">
    <source>
    </source>
</evidence>
<evidence type="ECO:0000269" key="17">
    <source>
    </source>
</evidence>
<evidence type="ECO:0000303" key="18">
    <source>
    </source>
</evidence>
<evidence type="ECO:0000303" key="19">
    <source>
    </source>
</evidence>
<evidence type="ECO:0000303" key="20">
    <source>
    </source>
</evidence>
<evidence type="ECO:0000305" key="21"/>
<evidence type="ECO:0000312" key="22">
    <source>
        <dbReference type="EMBL" id="AAC02688.1"/>
    </source>
</evidence>
<evidence type="ECO:0000312" key="23">
    <source>
        <dbReference type="EMBL" id="AAH03138.1"/>
    </source>
</evidence>
<evidence type="ECO:0000312" key="24">
    <source>
        <dbReference type="EMBL" id="AAH05140.1"/>
    </source>
</evidence>
<evidence type="ECO:0000312" key="25">
    <source>
        <dbReference type="HGNC" id="HGNC:9341"/>
    </source>
</evidence>
<evidence type="ECO:0007744" key="26">
    <source>
    </source>
</evidence>
<evidence type="ECO:0007744" key="27">
    <source>
    </source>
</evidence>
<evidence type="ECO:0007744" key="28">
    <source>
    </source>
</evidence>
<evidence type="ECO:0007829" key="29">
    <source>
        <dbReference type="PDB" id="3NRX"/>
    </source>
</evidence>
<evidence type="ECO:0007829" key="30">
    <source>
        <dbReference type="PDB" id="3NRY"/>
    </source>
</evidence>
<evidence type="ECO:0007829" key="31">
    <source>
        <dbReference type="PDB" id="4L6Y"/>
    </source>
</evidence>
<proteinExistence type="evidence at protein level"/>
<dbReference type="EMBL" id="AF044588">
    <property type="protein sequence ID" value="AAC02688.1"/>
    <property type="molecule type" value="mRNA"/>
</dbReference>
<dbReference type="EMBL" id="AK297117">
    <property type="protein sequence ID" value="BAG59623.1"/>
    <property type="molecule type" value="mRNA"/>
</dbReference>
<dbReference type="EMBL" id="AC068831">
    <property type="status" value="NOT_ANNOTATED_CDS"/>
    <property type="molecule type" value="Genomic_DNA"/>
</dbReference>
<dbReference type="EMBL" id="BC003138">
    <property type="protein sequence ID" value="AAH03138.1"/>
    <property type="molecule type" value="mRNA"/>
</dbReference>
<dbReference type="EMBL" id="BC005140">
    <property type="protein sequence ID" value="AAH05140.1"/>
    <property type="molecule type" value="mRNA"/>
</dbReference>
<dbReference type="EMBL" id="BX647317">
    <property type="status" value="NOT_ANNOTATED_CDS"/>
    <property type="molecule type" value="mRNA"/>
</dbReference>
<dbReference type="CCDS" id="CCDS32334.1">
    <molecule id="O43663-1"/>
</dbReference>
<dbReference type="CCDS" id="CCDS45352.1">
    <molecule id="O43663-4"/>
</dbReference>
<dbReference type="CCDS" id="CCDS45353.2">
    <molecule id="O43663-3"/>
</dbReference>
<dbReference type="RefSeq" id="NP_001254509.2">
    <molecule id="O43663-3"/>
    <property type="nucleotide sequence ID" value="NM_001267580.2"/>
</dbReference>
<dbReference type="RefSeq" id="NP_003972.2">
    <molecule id="O43663-1"/>
    <property type="nucleotide sequence ID" value="NM_003981.4"/>
</dbReference>
<dbReference type="RefSeq" id="NP_955445.2">
    <molecule id="O43663-4"/>
    <property type="nucleotide sequence ID" value="NM_199413.3"/>
</dbReference>
<dbReference type="PDB" id="3NRX">
    <property type="method" value="X-ray"/>
    <property type="resolution" value="1.75 A"/>
    <property type="chains" value="A/B=341-466"/>
</dbReference>
<dbReference type="PDB" id="3NRY">
    <property type="method" value="X-ray"/>
    <property type="resolution" value="2.00 A"/>
    <property type="chains" value="A=341-466"/>
</dbReference>
<dbReference type="PDB" id="4L3I">
    <property type="method" value="X-ray"/>
    <property type="resolution" value="3.60 A"/>
    <property type="chains" value="A/B=1-486"/>
</dbReference>
<dbReference type="PDB" id="4L6Y">
    <property type="method" value="X-ray"/>
    <property type="resolution" value="3.30 A"/>
    <property type="chains" value="A/B=1-486"/>
</dbReference>
<dbReference type="PDB" id="5KMG">
    <property type="method" value="EM"/>
    <property type="resolution" value="3.50 A"/>
    <property type="chains" value="P=341-464"/>
</dbReference>
<dbReference type="PDB" id="7VBG">
    <property type="method" value="NMR"/>
    <property type="chains" value="A/B=1-65"/>
</dbReference>
<dbReference type="PDBsum" id="3NRX"/>
<dbReference type="PDBsum" id="3NRY"/>
<dbReference type="PDBsum" id="4L3I"/>
<dbReference type="PDBsum" id="4L6Y"/>
<dbReference type="PDBsum" id="5KMG"/>
<dbReference type="PDBsum" id="7VBG"/>
<dbReference type="EMDB" id="EMD-8266"/>
<dbReference type="SMR" id="O43663"/>
<dbReference type="BioGRID" id="114517">
    <property type="interactions" value="1001"/>
</dbReference>
<dbReference type="CORUM" id="O43663"/>
<dbReference type="DIP" id="DIP-34436N"/>
<dbReference type="FunCoup" id="O43663">
    <property type="interactions" value="1626"/>
</dbReference>
<dbReference type="IntAct" id="O43663">
    <property type="interactions" value="44"/>
</dbReference>
<dbReference type="MINT" id="O43663"/>
<dbReference type="STRING" id="9606.ENSP00000377793"/>
<dbReference type="GlyGen" id="O43663">
    <property type="glycosylation" value="3 sites, 1 N-linked glycan (2 sites), 1 O-linked glycan (1 site)"/>
</dbReference>
<dbReference type="iPTMnet" id="O43663"/>
<dbReference type="PhosphoSitePlus" id="O43663"/>
<dbReference type="SwissPalm" id="O43663"/>
<dbReference type="BioMuta" id="PRC1"/>
<dbReference type="jPOST" id="O43663"/>
<dbReference type="MassIVE" id="O43663"/>
<dbReference type="PaxDb" id="9606-ENSP00000377793"/>
<dbReference type="PeptideAtlas" id="O43663"/>
<dbReference type="ProteomicsDB" id="46215"/>
<dbReference type="ProteomicsDB" id="49093">
    <molecule id="O43663-1"/>
</dbReference>
<dbReference type="ProteomicsDB" id="49094">
    <molecule id="O43663-2"/>
</dbReference>
<dbReference type="ProteomicsDB" id="49095">
    <molecule id="O43663-3"/>
</dbReference>
<dbReference type="Pumba" id="O43663"/>
<dbReference type="Antibodypedia" id="28979">
    <property type="antibodies" value="273 antibodies from 36 providers"/>
</dbReference>
<dbReference type="DNASU" id="9055"/>
<dbReference type="Ensembl" id="ENST00000361188.9">
    <molecule id="O43663-4"/>
    <property type="protein sequence ID" value="ENSP00000354679.5"/>
    <property type="gene ID" value="ENSG00000198901.14"/>
</dbReference>
<dbReference type="Ensembl" id="ENST00000394249.8">
    <molecule id="O43663-1"/>
    <property type="protein sequence ID" value="ENSP00000377793.3"/>
    <property type="gene ID" value="ENSG00000198901.14"/>
</dbReference>
<dbReference type="Ensembl" id="ENST00000442656.6">
    <molecule id="O43663-3"/>
    <property type="protein sequence ID" value="ENSP00000409549.2"/>
    <property type="gene ID" value="ENSG00000198901.14"/>
</dbReference>
<dbReference type="GeneID" id="9055"/>
<dbReference type="KEGG" id="hsa:9055"/>
<dbReference type="MANE-Select" id="ENST00000394249.8">
    <property type="protein sequence ID" value="ENSP00000377793.3"/>
    <property type="RefSeq nucleotide sequence ID" value="NM_003981.4"/>
    <property type="RefSeq protein sequence ID" value="NP_003972.2"/>
</dbReference>
<dbReference type="UCSC" id="uc002bqm.5">
    <molecule id="O43663-1"/>
    <property type="organism name" value="human"/>
</dbReference>
<dbReference type="AGR" id="HGNC:9341"/>
<dbReference type="CTD" id="9055"/>
<dbReference type="DisGeNET" id="9055"/>
<dbReference type="GeneCards" id="PRC1"/>
<dbReference type="HGNC" id="HGNC:9341">
    <property type="gene designation" value="PRC1"/>
</dbReference>
<dbReference type="HPA" id="ENSG00000198901">
    <property type="expression patterns" value="Tissue enhanced (bone marrow, testis)"/>
</dbReference>
<dbReference type="MIM" id="603484">
    <property type="type" value="gene"/>
</dbReference>
<dbReference type="neXtProt" id="NX_O43663"/>
<dbReference type="OpenTargets" id="ENSG00000198901"/>
<dbReference type="PharmGKB" id="PA33703"/>
<dbReference type="VEuPathDB" id="HostDB:ENSG00000198901"/>
<dbReference type="eggNOG" id="KOG4302">
    <property type="taxonomic scope" value="Eukaryota"/>
</dbReference>
<dbReference type="GeneTree" id="ENSGT00390000009453"/>
<dbReference type="HOGENOM" id="CLU_022964_1_0_1"/>
<dbReference type="InParanoid" id="O43663"/>
<dbReference type="OMA" id="QLHGIYD"/>
<dbReference type="OrthoDB" id="642895at2759"/>
<dbReference type="PAN-GO" id="O43663">
    <property type="GO annotations" value="6 GO annotations based on evolutionary models"/>
</dbReference>
<dbReference type="PhylomeDB" id="O43663"/>
<dbReference type="TreeFam" id="TF323976"/>
<dbReference type="PathwayCommons" id="O43663"/>
<dbReference type="Reactome" id="R-HSA-5625900">
    <property type="pathway name" value="RHO GTPases activate CIT"/>
</dbReference>
<dbReference type="SignaLink" id="O43663"/>
<dbReference type="SIGNOR" id="O43663"/>
<dbReference type="BioGRID-ORCS" id="9055">
    <property type="hits" value="786 hits in 1169 CRISPR screens"/>
</dbReference>
<dbReference type="CD-CODE" id="F701F3BC">
    <property type="entry name" value="PcG body"/>
</dbReference>
<dbReference type="ChiTaRS" id="PRC1">
    <property type="organism name" value="human"/>
</dbReference>
<dbReference type="EvolutionaryTrace" id="O43663"/>
<dbReference type="GeneWiki" id="PRC1"/>
<dbReference type="GenomeRNAi" id="9055"/>
<dbReference type="Pharos" id="O43663">
    <property type="development level" value="Tbio"/>
</dbReference>
<dbReference type="PRO" id="PR:O43663"/>
<dbReference type="Proteomes" id="UP000005640">
    <property type="component" value="Chromosome 15"/>
</dbReference>
<dbReference type="RNAct" id="O43663">
    <property type="molecule type" value="protein"/>
</dbReference>
<dbReference type="Bgee" id="ENSG00000198901">
    <property type="expression patterns" value="Expressed in ventricular zone and 101 other cell types or tissues"/>
</dbReference>
<dbReference type="ExpressionAtlas" id="O43663">
    <property type="expression patterns" value="baseline and differential"/>
</dbReference>
<dbReference type="GO" id="GO:0005694">
    <property type="term" value="C:chromosome"/>
    <property type="evidence" value="ECO:0007669"/>
    <property type="project" value="UniProtKB-SubCell"/>
</dbReference>
<dbReference type="GO" id="GO:0070938">
    <property type="term" value="C:contractile ring"/>
    <property type="evidence" value="ECO:0000314"/>
    <property type="project" value="UniProtKB"/>
</dbReference>
<dbReference type="GO" id="GO:0005737">
    <property type="term" value="C:cytoplasm"/>
    <property type="evidence" value="ECO:0000318"/>
    <property type="project" value="GO_Central"/>
</dbReference>
<dbReference type="GO" id="GO:0005829">
    <property type="term" value="C:cytosol"/>
    <property type="evidence" value="ECO:0000304"/>
    <property type="project" value="Reactome"/>
</dbReference>
<dbReference type="GO" id="GO:0045171">
    <property type="term" value="C:intercellular bridge"/>
    <property type="evidence" value="ECO:0000314"/>
    <property type="project" value="HPA"/>
</dbReference>
<dbReference type="GO" id="GO:0015630">
    <property type="term" value="C:microtubule cytoskeleton"/>
    <property type="evidence" value="ECO:0000314"/>
    <property type="project" value="HPA"/>
</dbReference>
<dbReference type="GO" id="GO:0030496">
    <property type="term" value="C:midbody"/>
    <property type="evidence" value="ECO:0000314"/>
    <property type="project" value="HPA"/>
</dbReference>
<dbReference type="GO" id="GO:1990023">
    <property type="term" value="C:mitotic spindle midzone"/>
    <property type="evidence" value="ECO:0000318"/>
    <property type="project" value="GO_Central"/>
</dbReference>
<dbReference type="GO" id="GO:0005654">
    <property type="term" value="C:nucleoplasm"/>
    <property type="evidence" value="ECO:0000314"/>
    <property type="project" value="HPA"/>
</dbReference>
<dbReference type="GO" id="GO:0005634">
    <property type="term" value="C:nucleus"/>
    <property type="evidence" value="ECO:0000314"/>
    <property type="project" value="UniProtKB"/>
</dbReference>
<dbReference type="GO" id="GO:0005886">
    <property type="term" value="C:plasma membrane"/>
    <property type="evidence" value="ECO:0000314"/>
    <property type="project" value="HPA"/>
</dbReference>
<dbReference type="GO" id="GO:0005819">
    <property type="term" value="C:spindle"/>
    <property type="evidence" value="ECO:0000314"/>
    <property type="project" value="UniProtKB"/>
</dbReference>
<dbReference type="GO" id="GO:0005876">
    <property type="term" value="C:spindle microtubule"/>
    <property type="evidence" value="ECO:0000304"/>
    <property type="project" value="ProtInc"/>
</dbReference>
<dbReference type="GO" id="GO:0000922">
    <property type="term" value="C:spindle pole"/>
    <property type="evidence" value="ECO:0007669"/>
    <property type="project" value="UniProtKB-SubCell"/>
</dbReference>
<dbReference type="GO" id="GO:0042802">
    <property type="term" value="F:identical protein binding"/>
    <property type="evidence" value="ECO:0000353"/>
    <property type="project" value="IntAct"/>
</dbReference>
<dbReference type="GO" id="GO:0019894">
    <property type="term" value="F:kinesin binding"/>
    <property type="evidence" value="ECO:0000353"/>
    <property type="project" value="UniProtKB"/>
</dbReference>
<dbReference type="GO" id="GO:0008017">
    <property type="term" value="F:microtubule binding"/>
    <property type="evidence" value="ECO:0000318"/>
    <property type="project" value="GO_Central"/>
</dbReference>
<dbReference type="GO" id="GO:0019901">
    <property type="term" value="F:protein kinase binding"/>
    <property type="evidence" value="ECO:0000353"/>
    <property type="project" value="UniProtKB"/>
</dbReference>
<dbReference type="GO" id="GO:0051301">
    <property type="term" value="P:cell division"/>
    <property type="evidence" value="ECO:0007669"/>
    <property type="project" value="UniProtKB-KW"/>
</dbReference>
<dbReference type="GO" id="GO:0000226">
    <property type="term" value="P:microtubule cytoskeleton organization"/>
    <property type="evidence" value="ECO:0000318"/>
    <property type="project" value="GO_Central"/>
</dbReference>
<dbReference type="GO" id="GO:0000022">
    <property type="term" value="P:mitotic spindle elongation"/>
    <property type="evidence" value="ECO:0000304"/>
    <property type="project" value="ProtInc"/>
</dbReference>
<dbReference type="GO" id="GO:0051256">
    <property type="term" value="P:mitotic spindle midzone assembly"/>
    <property type="evidence" value="ECO:0000318"/>
    <property type="project" value="GO_Central"/>
</dbReference>
<dbReference type="GO" id="GO:0008284">
    <property type="term" value="P:positive regulation of cell population proliferation"/>
    <property type="evidence" value="ECO:0000315"/>
    <property type="project" value="UniProtKB"/>
</dbReference>
<dbReference type="GO" id="GO:0032465">
    <property type="term" value="P:regulation of cytokinesis"/>
    <property type="evidence" value="ECO:0000314"/>
    <property type="project" value="UniProtKB"/>
</dbReference>
<dbReference type="DisProt" id="DP02316"/>
<dbReference type="FunFam" id="1.20.58.1520:FF:000001">
    <property type="entry name" value="Protein regulator of cytokinesis 1"/>
    <property type="match status" value="1"/>
</dbReference>
<dbReference type="Gene3D" id="1.20.58.1520">
    <property type="match status" value="1"/>
</dbReference>
<dbReference type="InterPro" id="IPR007145">
    <property type="entry name" value="MAP65_Ase1_PRC1"/>
</dbReference>
<dbReference type="PANTHER" id="PTHR19321:SF1">
    <property type="entry name" value="PROTEIN REGULATOR OF CYTOKINESIS 1"/>
    <property type="match status" value="1"/>
</dbReference>
<dbReference type="PANTHER" id="PTHR19321">
    <property type="entry name" value="PROTEIN REGULATOR OF CYTOKINESIS 1 PRC1-RELATED"/>
    <property type="match status" value="1"/>
</dbReference>
<dbReference type="Pfam" id="PF03999">
    <property type="entry name" value="MAP65_ASE1"/>
    <property type="match status" value="1"/>
</dbReference>